<comment type="function">
    <text evidence="1">This protein is one of the two subunits of integration host factor, a specific DNA-binding protein that functions in genetic recombination as well as in transcriptional and translational control.</text>
</comment>
<comment type="subunit">
    <text evidence="1">Heterodimer of an alpha and a beta chain.</text>
</comment>
<comment type="similarity">
    <text evidence="1">Belongs to the bacterial histone-like protein family.</text>
</comment>
<proteinExistence type="inferred from homology"/>
<protein>
    <recommendedName>
        <fullName evidence="1">Integration host factor subunit beta</fullName>
        <shortName evidence="1">IHF-beta</shortName>
    </recommendedName>
</protein>
<reference key="1">
    <citation type="journal article" date="2005" name="Nucleic Acids Res.">
        <title>Genome dynamics and diversity of Shigella species, the etiologic agents of bacillary dysentery.</title>
        <authorList>
            <person name="Yang F."/>
            <person name="Yang J."/>
            <person name="Zhang X."/>
            <person name="Chen L."/>
            <person name="Jiang Y."/>
            <person name="Yan Y."/>
            <person name="Tang X."/>
            <person name="Wang J."/>
            <person name="Xiong Z."/>
            <person name="Dong J."/>
            <person name="Xue Y."/>
            <person name="Zhu Y."/>
            <person name="Xu X."/>
            <person name="Sun L."/>
            <person name="Chen S."/>
            <person name="Nie H."/>
            <person name="Peng J."/>
            <person name="Xu J."/>
            <person name="Wang Y."/>
            <person name="Yuan Z."/>
            <person name="Wen Y."/>
            <person name="Yao Z."/>
            <person name="Shen Y."/>
            <person name="Qiang B."/>
            <person name="Hou Y."/>
            <person name="Yu J."/>
            <person name="Jin Q."/>
        </authorList>
    </citation>
    <scope>NUCLEOTIDE SEQUENCE [LARGE SCALE GENOMIC DNA]</scope>
    <source>
        <strain>Ss046</strain>
    </source>
</reference>
<feature type="chain" id="PRO_1000060668" description="Integration host factor subunit beta">
    <location>
        <begin position="1"/>
        <end position="94"/>
    </location>
</feature>
<name>IHFB_SHISS</name>
<sequence length="94" mass="10651">MTKSELIERLATQQSHIPAKTVEDAVKEMLEHMASTLAQGERIEIRGFGSFSLHYRAPRTGRNPKTGDKVELEGKYVPHFKPGKELRDRANIYG</sequence>
<accession>Q3Z3K9</accession>
<keyword id="KW-0233">DNA recombination</keyword>
<keyword id="KW-0238">DNA-binding</keyword>
<keyword id="KW-1185">Reference proteome</keyword>
<keyword id="KW-0804">Transcription</keyword>
<keyword id="KW-0805">Transcription regulation</keyword>
<keyword id="KW-0810">Translation regulation</keyword>
<organism>
    <name type="scientific">Shigella sonnei (strain Ss046)</name>
    <dbReference type="NCBI Taxonomy" id="300269"/>
    <lineage>
        <taxon>Bacteria</taxon>
        <taxon>Pseudomonadati</taxon>
        <taxon>Pseudomonadota</taxon>
        <taxon>Gammaproteobacteria</taxon>
        <taxon>Enterobacterales</taxon>
        <taxon>Enterobacteriaceae</taxon>
        <taxon>Shigella</taxon>
    </lineage>
</organism>
<gene>
    <name evidence="1" type="primary">ihfB</name>
    <name evidence="1" type="synonym">himD</name>
    <name type="ordered locus">SSON_0914</name>
</gene>
<evidence type="ECO:0000255" key="1">
    <source>
        <dbReference type="HAMAP-Rule" id="MF_00381"/>
    </source>
</evidence>
<dbReference type="EMBL" id="CP000038">
    <property type="protein sequence ID" value="AAZ87653.1"/>
    <property type="molecule type" value="Genomic_DNA"/>
</dbReference>
<dbReference type="RefSeq" id="WP_000167336.1">
    <property type="nucleotide sequence ID" value="NC_007384.1"/>
</dbReference>
<dbReference type="SMR" id="Q3Z3K9"/>
<dbReference type="GeneID" id="93776505"/>
<dbReference type="KEGG" id="ssn:SSON_0914"/>
<dbReference type="HOGENOM" id="CLU_105066_2_0_6"/>
<dbReference type="Proteomes" id="UP000002529">
    <property type="component" value="Chromosome"/>
</dbReference>
<dbReference type="GO" id="GO:0005694">
    <property type="term" value="C:chromosome"/>
    <property type="evidence" value="ECO:0007669"/>
    <property type="project" value="InterPro"/>
</dbReference>
<dbReference type="GO" id="GO:0005829">
    <property type="term" value="C:cytosol"/>
    <property type="evidence" value="ECO:0007669"/>
    <property type="project" value="TreeGrafter"/>
</dbReference>
<dbReference type="GO" id="GO:0003677">
    <property type="term" value="F:DNA binding"/>
    <property type="evidence" value="ECO:0007669"/>
    <property type="project" value="UniProtKB-UniRule"/>
</dbReference>
<dbReference type="GO" id="GO:0030527">
    <property type="term" value="F:structural constituent of chromatin"/>
    <property type="evidence" value="ECO:0007669"/>
    <property type="project" value="InterPro"/>
</dbReference>
<dbReference type="GO" id="GO:0006310">
    <property type="term" value="P:DNA recombination"/>
    <property type="evidence" value="ECO:0007669"/>
    <property type="project" value="UniProtKB-UniRule"/>
</dbReference>
<dbReference type="GO" id="GO:0006355">
    <property type="term" value="P:regulation of DNA-templated transcription"/>
    <property type="evidence" value="ECO:0007669"/>
    <property type="project" value="UniProtKB-UniRule"/>
</dbReference>
<dbReference type="GO" id="GO:0006417">
    <property type="term" value="P:regulation of translation"/>
    <property type="evidence" value="ECO:0007669"/>
    <property type="project" value="UniProtKB-UniRule"/>
</dbReference>
<dbReference type="CDD" id="cd13836">
    <property type="entry name" value="IHF_B"/>
    <property type="match status" value="1"/>
</dbReference>
<dbReference type="FunFam" id="4.10.520.10:FF:000003">
    <property type="entry name" value="Integration host factor subunit beta"/>
    <property type="match status" value="1"/>
</dbReference>
<dbReference type="Gene3D" id="4.10.520.10">
    <property type="entry name" value="IHF-like DNA-binding proteins"/>
    <property type="match status" value="1"/>
</dbReference>
<dbReference type="HAMAP" id="MF_00381">
    <property type="entry name" value="IHF_beta"/>
    <property type="match status" value="1"/>
</dbReference>
<dbReference type="InterPro" id="IPR000119">
    <property type="entry name" value="Hist_DNA-bd"/>
</dbReference>
<dbReference type="InterPro" id="IPR020816">
    <property type="entry name" value="Histone-like_DNA-bd_CS"/>
</dbReference>
<dbReference type="InterPro" id="IPR010992">
    <property type="entry name" value="IHF-like_DNA-bd_dom_sf"/>
</dbReference>
<dbReference type="InterPro" id="IPR005685">
    <property type="entry name" value="IHF_beta"/>
</dbReference>
<dbReference type="NCBIfam" id="TIGR00988">
    <property type="entry name" value="hip"/>
    <property type="match status" value="1"/>
</dbReference>
<dbReference type="NCBIfam" id="NF001222">
    <property type="entry name" value="PRK00199.1"/>
    <property type="match status" value="1"/>
</dbReference>
<dbReference type="PANTHER" id="PTHR33175">
    <property type="entry name" value="DNA-BINDING PROTEIN HU"/>
    <property type="match status" value="1"/>
</dbReference>
<dbReference type="PANTHER" id="PTHR33175:SF5">
    <property type="entry name" value="INTEGRATION HOST FACTOR SUBUNIT BETA"/>
    <property type="match status" value="1"/>
</dbReference>
<dbReference type="Pfam" id="PF00216">
    <property type="entry name" value="Bac_DNA_binding"/>
    <property type="match status" value="1"/>
</dbReference>
<dbReference type="PRINTS" id="PR01727">
    <property type="entry name" value="DNABINDINGHU"/>
</dbReference>
<dbReference type="SMART" id="SM00411">
    <property type="entry name" value="BHL"/>
    <property type="match status" value="1"/>
</dbReference>
<dbReference type="SUPFAM" id="SSF47729">
    <property type="entry name" value="IHF-like DNA-binding proteins"/>
    <property type="match status" value="1"/>
</dbReference>
<dbReference type="PROSITE" id="PS00045">
    <property type="entry name" value="HISTONE_LIKE"/>
    <property type="match status" value="1"/>
</dbReference>